<gene>
    <name type="primary">FTH1</name>
    <name type="ordered locus">YBR207W</name>
    <name type="ORF">YBR1446</name>
</gene>
<sequence length="465" mass="51420">MAFEDYFSFQIFFIFLRESLEIVVIVSILLTIVKQGLSVEDDSPFEGSSSSAGLPSPNTNTNADSTTAFLQAGPSDGNAIGTSATAANNKSRPLNVEEEEEIYEYSNELRDQDRESDEHTADNVKLYQKLKIQILAGGAFGLLLCMLIGGAFVSIFYHIGTDLWTLSEHYYEGVLSLVASVIISVMGLFFLRMGKLREKFRVKLASIIYSKDNNLLGNKTQKGVKFSEKYSFFILPFITTLREGLEAVVFIGGIGIDQPLSSIPLSMVLATAISTVFGIFFFRYSSSLSLKICLVVATCFLYLIAAGLFSKGVWQLELQDYVNKCNGQDMSEVGNGPGSYDISRSVWHVNCCNGEKDGGWMIFTAIFGWTNSATVGSVISYNAYWLVLICALKLLMIEEKYGYIPYLPISWQKKRIMKRLSIAKASLDLKHHTSELNSSTSEPDSQRRSKDSSVPLIIDSSGSAN</sequence>
<feature type="chain" id="PRO_0000159650" description="Iron transporter FTH1">
    <location>
        <begin position="1"/>
        <end position="465"/>
    </location>
</feature>
<feature type="topological domain" description="Vacuolar" evidence="1">
    <location>
        <begin position="1"/>
        <end position="11"/>
    </location>
</feature>
<feature type="transmembrane region" description="Helical" evidence="1">
    <location>
        <begin position="12"/>
        <end position="32"/>
    </location>
</feature>
<feature type="topological domain" description="Cytoplasmic" evidence="1">
    <location>
        <begin position="33"/>
        <end position="135"/>
    </location>
</feature>
<feature type="transmembrane region" description="Helical" evidence="1">
    <location>
        <begin position="136"/>
        <end position="156"/>
    </location>
</feature>
<feature type="topological domain" description="Vacuolar" evidence="1">
    <location>
        <begin position="157"/>
        <end position="170"/>
    </location>
</feature>
<feature type="transmembrane region" description="Helical" evidence="1">
    <location>
        <begin position="171"/>
        <end position="191"/>
    </location>
</feature>
<feature type="topological domain" description="Cytoplasmic" evidence="1">
    <location>
        <begin position="192"/>
        <end position="289"/>
    </location>
</feature>
<feature type="transmembrane region" description="Helical" evidence="1">
    <location>
        <begin position="290"/>
        <end position="310"/>
    </location>
</feature>
<feature type="topological domain" description="Vacuolar" evidence="1">
    <location>
        <begin position="311"/>
        <end position="358"/>
    </location>
</feature>
<feature type="transmembrane region" description="Helical" evidence="1">
    <location>
        <begin position="359"/>
        <end position="379"/>
    </location>
</feature>
<feature type="topological domain" description="Cytoplasmic" evidence="1">
    <location>
        <begin position="380"/>
        <end position="465"/>
    </location>
</feature>
<feature type="region of interest" description="Disordered" evidence="2">
    <location>
        <begin position="44"/>
        <end position="66"/>
    </location>
</feature>
<feature type="region of interest" description="Disordered" evidence="2">
    <location>
        <begin position="433"/>
        <end position="465"/>
    </location>
</feature>
<feature type="compositionally biased region" description="Polar residues" evidence="2">
    <location>
        <begin position="46"/>
        <end position="66"/>
    </location>
</feature>
<feature type="modified residue" description="Phosphoserine" evidence="7 8 9">
    <location>
        <position position="449"/>
    </location>
</feature>
<feature type="modified residue" description="Phosphoserine" evidence="9">
    <location>
        <position position="453"/>
    </location>
</feature>
<feature type="sequence conflict" description="In Ref. 2; CAA79694 and 3; CAA85171." evidence="6" ref="2 3">
    <original>E</original>
    <variation>K</variation>
    <location>
        <position position="18"/>
    </location>
</feature>
<feature type="sequence conflict" description="In Ref. 2; CAA79694 and 3; CAA85171." evidence="6" ref="2 3">
    <original>G</original>
    <variation>D</variation>
    <location>
        <position position="36"/>
    </location>
</feature>
<feature type="sequence conflict" description="In Ref. 2; CAA79694 and 3; CAA85171." evidence="6" ref="2 3">
    <original>E</original>
    <variation>Q</variation>
    <location>
        <position position="228"/>
    </location>
</feature>
<feature type="sequence conflict" description="In Ref. 2; CAA79694 and 3; CAA85171." evidence="6" ref="2 3">
    <original>VF</original>
    <variation>YS</variation>
    <location>
        <begin position="249"/>
        <end position="250"/>
    </location>
</feature>
<feature type="sequence conflict" description="In Ref. 2; CAA79694 and 3; CAA85171." evidence="6" ref="2 3">
    <original>G</original>
    <variation>E</variation>
    <location>
        <position position="334"/>
    </location>
</feature>
<feature type="sequence conflict" description="In Ref. 2; CAA79694 and 3; CAA85171." evidence="6" ref="2 3">
    <original>IC</original>
    <variation>KY</variation>
    <location>
        <begin position="389"/>
        <end position="390"/>
    </location>
</feature>
<feature type="sequence conflict" description="In Ref. 2; CAA79694 and 3; CAA85171." evidence="6" ref="2 3">
    <original>EKY</original>
    <variation>GKC</variation>
    <location>
        <begin position="399"/>
        <end position="401"/>
    </location>
</feature>
<protein>
    <recommendedName>
        <fullName>Iron transporter FTH1</fullName>
    </recommendedName>
</protein>
<comment type="function">
    <text evidence="3">High affinity iron transporter probably involved in transport of intravacuolar stores of iron.</text>
</comment>
<comment type="subunit">
    <text evidence="3">Interacts with FET5.</text>
</comment>
<comment type="interaction">
    <interactant intactId="EBI-20959">
        <id>P38310</id>
    </interactant>
    <interactant intactId="EBI-5006">
        <id>P32798</id>
        <label>COT1</label>
    </interactant>
    <organismsDiffer>false</organismsDiffer>
    <experiments>3</experiments>
</comment>
<comment type="interaction">
    <interactant intactId="EBI-20959">
        <id>P38310</id>
    </interactant>
    <interactant intactId="EBI-6891">
        <id>P43561</id>
        <label>FET5</label>
    </interactant>
    <organismsDiffer>false</organismsDiffer>
    <experiments>8</experiments>
</comment>
<comment type="interaction">
    <interactant intactId="EBI-20959">
        <id>P38310</id>
    </interactant>
    <interactant intactId="EBI-3097">
        <id>P38929</id>
        <label>PMC1</label>
    </interactant>
    <organismsDiffer>false</organismsDiffer>
    <experiments>3</experiments>
</comment>
<comment type="subcellular location">
    <subcellularLocation>
        <location evidence="3 4">Vacuole membrane</location>
        <topology evidence="3 4">Multi-pass membrane protein</topology>
    </subcellularLocation>
</comment>
<comment type="miscellaneous">
    <text evidence="5">Present with 486 molecules/cell in log phase SD medium.</text>
</comment>
<comment type="similarity">
    <text evidence="6">Belongs to the oxidase-dependent Fe transporter (OFeT) (TC 9.A.10.1) family.</text>
</comment>
<accession>P38310</accession>
<accession>D6VQK4</accession>
<accession>Q9URQ1</accession>
<organism>
    <name type="scientific">Saccharomyces cerevisiae (strain ATCC 204508 / S288c)</name>
    <name type="common">Baker's yeast</name>
    <dbReference type="NCBI Taxonomy" id="559292"/>
    <lineage>
        <taxon>Eukaryota</taxon>
        <taxon>Fungi</taxon>
        <taxon>Dikarya</taxon>
        <taxon>Ascomycota</taxon>
        <taxon>Saccharomycotina</taxon>
        <taxon>Saccharomycetes</taxon>
        <taxon>Saccharomycetales</taxon>
        <taxon>Saccharomycetaceae</taxon>
        <taxon>Saccharomyces</taxon>
    </lineage>
</organism>
<evidence type="ECO:0000255" key="1"/>
<evidence type="ECO:0000256" key="2">
    <source>
        <dbReference type="SAM" id="MobiDB-lite"/>
    </source>
</evidence>
<evidence type="ECO:0000269" key="3">
    <source>
    </source>
</evidence>
<evidence type="ECO:0000269" key="4">
    <source>
    </source>
</evidence>
<evidence type="ECO:0000269" key="5">
    <source>
    </source>
</evidence>
<evidence type="ECO:0000305" key="6"/>
<evidence type="ECO:0007744" key="7">
    <source>
    </source>
</evidence>
<evidence type="ECO:0007744" key="8">
    <source>
    </source>
</evidence>
<evidence type="ECO:0007744" key="9">
    <source>
    </source>
</evidence>
<reference key="1">
    <citation type="journal article" date="1999" name="J. Biol. Chem.">
        <title>The iron transporter Fth1p forms a complex with the Fet5 iron oxidase and resides on the vacuolar membrane.</title>
        <authorList>
            <person name="Urbanowski J.L."/>
            <person name="Piper R.C."/>
        </authorList>
    </citation>
    <scope>NUCLEOTIDE SEQUENCE [GENOMIC DNA]</scope>
    <scope>FUNCTION</scope>
    <scope>SUBCELLULAR LOCATION</scope>
    <scope>INTERACTION WITH FET5</scope>
    <source>
        <strain>ATCC 96099 / S288c / SEY6210</strain>
    </source>
</reference>
<reference key="2">
    <citation type="journal article" date="1993" name="Yeast">
        <title>A 12.8 kb segment, on the right arm of chromosome II from Saccharomyces cerevisiae including part of the DUR1,2 gene, contains five putative new genes.</title>
        <authorList>
            <person name="Bussereau F."/>
            <person name="Mallet L."/>
            <person name="Gaillon L."/>
            <person name="Jacquet M."/>
        </authorList>
    </citation>
    <scope>NUCLEOTIDE SEQUENCE [GENOMIC DNA]</scope>
    <source>
        <strain>ATCC 204508 / S288c</strain>
    </source>
</reference>
<reference key="3">
    <citation type="journal article" date="1994" name="EMBO J.">
        <title>Complete DNA sequence of yeast chromosome II.</title>
        <authorList>
            <person name="Feldmann H."/>
            <person name="Aigle M."/>
            <person name="Aljinovic G."/>
            <person name="Andre B."/>
            <person name="Baclet M.C."/>
            <person name="Barthe C."/>
            <person name="Baur A."/>
            <person name="Becam A.-M."/>
            <person name="Biteau N."/>
            <person name="Boles E."/>
            <person name="Brandt T."/>
            <person name="Brendel M."/>
            <person name="Brueckner M."/>
            <person name="Bussereau F."/>
            <person name="Christiansen C."/>
            <person name="Contreras R."/>
            <person name="Crouzet M."/>
            <person name="Cziepluch C."/>
            <person name="Demolis N."/>
            <person name="Delaveau T."/>
            <person name="Doignon F."/>
            <person name="Domdey H."/>
            <person name="Duesterhus S."/>
            <person name="Dubois E."/>
            <person name="Dujon B."/>
            <person name="El Bakkoury M."/>
            <person name="Entian K.-D."/>
            <person name="Feuermann M."/>
            <person name="Fiers W."/>
            <person name="Fobo G.M."/>
            <person name="Fritz C."/>
            <person name="Gassenhuber J."/>
            <person name="Glansdorff N."/>
            <person name="Goffeau A."/>
            <person name="Grivell L.A."/>
            <person name="de Haan M."/>
            <person name="Hein C."/>
            <person name="Herbert C.J."/>
            <person name="Hollenberg C.P."/>
            <person name="Holmstroem K."/>
            <person name="Jacq C."/>
            <person name="Jacquet M."/>
            <person name="Jauniaux J.-C."/>
            <person name="Jonniaux J.-L."/>
            <person name="Kallesoee T."/>
            <person name="Kiesau P."/>
            <person name="Kirchrath L."/>
            <person name="Koetter P."/>
            <person name="Korol S."/>
            <person name="Liebl S."/>
            <person name="Logghe M."/>
            <person name="Lohan A.J.E."/>
            <person name="Louis E.J."/>
            <person name="Li Z.Y."/>
            <person name="Maat M.J."/>
            <person name="Mallet L."/>
            <person name="Mannhaupt G."/>
            <person name="Messenguy F."/>
            <person name="Miosga T."/>
            <person name="Molemans F."/>
            <person name="Mueller S."/>
            <person name="Nasr F."/>
            <person name="Obermaier B."/>
            <person name="Perea J."/>
            <person name="Pierard A."/>
            <person name="Piravandi E."/>
            <person name="Pohl F.M."/>
            <person name="Pohl T.M."/>
            <person name="Potier S."/>
            <person name="Proft M."/>
            <person name="Purnelle B."/>
            <person name="Ramezani Rad M."/>
            <person name="Rieger M."/>
            <person name="Rose M."/>
            <person name="Schaaff-Gerstenschlaeger I."/>
            <person name="Scherens B."/>
            <person name="Schwarzlose C."/>
            <person name="Skala J."/>
            <person name="Slonimski P.P."/>
            <person name="Smits P.H.M."/>
            <person name="Souciet J.-L."/>
            <person name="Steensma H.Y."/>
            <person name="Stucka R."/>
            <person name="Urrestarazu L.A."/>
            <person name="van der Aart Q.J.M."/>
            <person name="Van Dyck L."/>
            <person name="Vassarotti A."/>
            <person name="Vetter I."/>
            <person name="Vierendeels F."/>
            <person name="Vissers S."/>
            <person name="Wagner G."/>
            <person name="de Wergifosse P."/>
            <person name="Wolfe K.H."/>
            <person name="Zagulski M."/>
            <person name="Zimmermann F.K."/>
            <person name="Mewes H.-W."/>
            <person name="Kleine K."/>
        </authorList>
    </citation>
    <scope>NUCLEOTIDE SEQUENCE [LARGE SCALE GENOMIC DNA]</scope>
    <source>
        <strain>ATCC 204508 / S288c</strain>
    </source>
</reference>
<reference key="4">
    <citation type="journal article" date="2014" name="G3 (Bethesda)">
        <title>The reference genome sequence of Saccharomyces cerevisiae: Then and now.</title>
        <authorList>
            <person name="Engel S.R."/>
            <person name="Dietrich F.S."/>
            <person name="Fisk D.G."/>
            <person name="Binkley G."/>
            <person name="Balakrishnan R."/>
            <person name="Costanzo M.C."/>
            <person name="Dwight S.S."/>
            <person name="Hitz B.C."/>
            <person name="Karra K."/>
            <person name="Nash R.S."/>
            <person name="Weng S."/>
            <person name="Wong E.D."/>
            <person name="Lloyd P."/>
            <person name="Skrzypek M.S."/>
            <person name="Miyasato S.R."/>
            <person name="Simison M."/>
            <person name="Cherry J.M."/>
        </authorList>
    </citation>
    <scope>GENOME REANNOTATION</scope>
    <scope>SEQUENCE REVISION TO 18; 36; 228; 249-250; 334; 389-390 AND 399-401</scope>
    <source>
        <strain>ATCC 204508 / S288c</strain>
    </source>
</reference>
<reference key="5">
    <citation type="journal article" date="2003" name="Nature">
        <title>Global analysis of protein localization in budding yeast.</title>
        <authorList>
            <person name="Huh W.-K."/>
            <person name="Falvo J.V."/>
            <person name="Gerke L.C."/>
            <person name="Carroll A.S."/>
            <person name="Howson R.W."/>
            <person name="Weissman J.S."/>
            <person name="O'Shea E.K."/>
        </authorList>
    </citation>
    <scope>SUBCELLULAR LOCATION [LARGE SCALE ANALYSIS]</scope>
</reference>
<reference key="6">
    <citation type="journal article" date="2003" name="Nature">
        <title>Global analysis of protein expression in yeast.</title>
        <authorList>
            <person name="Ghaemmaghami S."/>
            <person name="Huh W.-K."/>
            <person name="Bower K."/>
            <person name="Howson R.W."/>
            <person name="Belle A."/>
            <person name="Dephoure N."/>
            <person name="O'Shea E.K."/>
            <person name="Weissman J.S."/>
        </authorList>
    </citation>
    <scope>LEVEL OF PROTEIN EXPRESSION [LARGE SCALE ANALYSIS]</scope>
</reference>
<reference key="7">
    <citation type="journal article" date="2006" name="Proc. Natl. Acad. Sci. U.S.A.">
        <title>A global topology map of the Saccharomyces cerevisiae membrane proteome.</title>
        <authorList>
            <person name="Kim H."/>
            <person name="Melen K."/>
            <person name="Oesterberg M."/>
            <person name="von Heijne G."/>
        </authorList>
    </citation>
    <scope>TOPOLOGY [LARGE SCALE ANALYSIS]</scope>
    <source>
        <strain>ATCC 208353 / W303-1A</strain>
    </source>
</reference>
<reference key="8">
    <citation type="journal article" date="2007" name="J. Proteome Res.">
        <title>Large-scale phosphorylation analysis of alpha-factor-arrested Saccharomyces cerevisiae.</title>
        <authorList>
            <person name="Li X."/>
            <person name="Gerber S.A."/>
            <person name="Rudner A.D."/>
            <person name="Beausoleil S.A."/>
            <person name="Haas W."/>
            <person name="Villen J."/>
            <person name="Elias J.E."/>
            <person name="Gygi S.P."/>
        </authorList>
    </citation>
    <scope>IDENTIFICATION BY MASS SPECTROMETRY [LARGE SCALE ANALYSIS]</scope>
    <source>
        <strain>ADR376</strain>
    </source>
</reference>
<reference key="9">
    <citation type="journal article" date="2007" name="Proc. Natl. Acad. Sci. U.S.A.">
        <title>Analysis of phosphorylation sites on proteins from Saccharomyces cerevisiae by electron transfer dissociation (ETD) mass spectrometry.</title>
        <authorList>
            <person name="Chi A."/>
            <person name="Huttenhower C."/>
            <person name="Geer L.Y."/>
            <person name="Coon J.J."/>
            <person name="Syka J.E.P."/>
            <person name="Bai D.L."/>
            <person name="Shabanowitz J."/>
            <person name="Burke D.J."/>
            <person name="Troyanskaya O.G."/>
            <person name="Hunt D.F."/>
        </authorList>
    </citation>
    <scope>PHOSPHORYLATION [LARGE SCALE ANALYSIS] AT SER-449</scope>
    <scope>IDENTIFICATION BY MASS SPECTROMETRY [LARGE SCALE ANALYSIS]</scope>
</reference>
<reference key="10">
    <citation type="journal article" date="2008" name="Mol. Cell. Proteomics">
        <title>A multidimensional chromatography technology for in-depth phosphoproteome analysis.</title>
        <authorList>
            <person name="Albuquerque C.P."/>
            <person name="Smolka M.B."/>
            <person name="Payne S.H."/>
            <person name="Bafna V."/>
            <person name="Eng J."/>
            <person name="Zhou H."/>
        </authorList>
    </citation>
    <scope>PHOSPHORYLATION [LARGE SCALE ANALYSIS] AT SER-449</scope>
    <scope>IDENTIFICATION BY MASS SPECTROMETRY [LARGE SCALE ANALYSIS]</scope>
</reference>
<reference key="11">
    <citation type="journal article" date="2009" name="Science">
        <title>Global analysis of Cdk1 substrate phosphorylation sites provides insights into evolution.</title>
        <authorList>
            <person name="Holt L.J."/>
            <person name="Tuch B.B."/>
            <person name="Villen J."/>
            <person name="Johnson A.D."/>
            <person name="Gygi S.P."/>
            <person name="Morgan D.O."/>
        </authorList>
    </citation>
    <scope>PHOSPHORYLATION [LARGE SCALE ANALYSIS] AT SER-449 AND SER-453</scope>
    <scope>IDENTIFICATION BY MASS SPECTROMETRY [LARGE SCALE ANALYSIS]</scope>
</reference>
<name>FTH1_YEAST</name>
<proteinExistence type="evidence at protein level"/>
<dbReference type="EMBL" id="AF177330">
    <property type="protein sequence ID" value="AAD53168.1"/>
    <property type="molecule type" value="Genomic_DNA"/>
</dbReference>
<dbReference type="EMBL" id="Z21487">
    <property type="protein sequence ID" value="CAA79694.1"/>
    <property type="molecule type" value="Genomic_DNA"/>
</dbReference>
<dbReference type="EMBL" id="Z36076">
    <property type="protein sequence ID" value="CAA85171.1"/>
    <property type="molecule type" value="Genomic_DNA"/>
</dbReference>
<dbReference type="EMBL" id="BK006936">
    <property type="protein sequence ID" value="DAA07324.2"/>
    <property type="molecule type" value="Genomic_DNA"/>
</dbReference>
<dbReference type="PIR" id="S34929">
    <property type="entry name" value="S34929"/>
</dbReference>
<dbReference type="RefSeq" id="NP_009766.4">
    <property type="nucleotide sequence ID" value="NM_001178555.4"/>
</dbReference>
<dbReference type="BioGRID" id="32903">
    <property type="interactions" value="92"/>
</dbReference>
<dbReference type="ComplexPortal" id="CPX-869">
    <property type="entry name" value="FET5-FTH1 high affinity iron exporter complex"/>
</dbReference>
<dbReference type="DIP" id="DIP-4165N"/>
<dbReference type="FunCoup" id="P38310">
    <property type="interactions" value="99"/>
</dbReference>
<dbReference type="IntAct" id="P38310">
    <property type="interactions" value="65"/>
</dbReference>
<dbReference type="MINT" id="P38310"/>
<dbReference type="STRING" id="4932.YBR207W"/>
<dbReference type="TCDB" id="2.A.108.1.4">
    <property type="family name" value="the iron/lead transporter (ilt) family"/>
</dbReference>
<dbReference type="iPTMnet" id="P38310"/>
<dbReference type="PaxDb" id="4932-YBR207W"/>
<dbReference type="PeptideAtlas" id="P38310"/>
<dbReference type="EnsemblFungi" id="YBR207W_mRNA">
    <property type="protein sequence ID" value="YBR207W"/>
    <property type="gene ID" value="YBR207W"/>
</dbReference>
<dbReference type="GeneID" id="852506"/>
<dbReference type="KEGG" id="sce:YBR207W"/>
<dbReference type="AGR" id="SGD:S000000411"/>
<dbReference type="SGD" id="S000000411">
    <property type="gene designation" value="FTH1"/>
</dbReference>
<dbReference type="VEuPathDB" id="FungiDB:YBR207W"/>
<dbReference type="eggNOG" id="ENOG502QQ3X">
    <property type="taxonomic scope" value="Eukaryota"/>
</dbReference>
<dbReference type="GeneTree" id="ENSGT00940000176478"/>
<dbReference type="HOGENOM" id="CLU_046738_1_1_1"/>
<dbReference type="InParanoid" id="P38310"/>
<dbReference type="OMA" id="NCCNGER"/>
<dbReference type="OrthoDB" id="4364at2759"/>
<dbReference type="BioCyc" id="YEAST:G3O-29146-MONOMER"/>
<dbReference type="BioGRID-ORCS" id="852506">
    <property type="hits" value="0 hits in 10 CRISPR screens"/>
</dbReference>
<dbReference type="PRO" id="PR:P38310"/>
<dbReference type="Proteomes" id="UP000002311">
    <property type="component" value="Chromosome II"/>
</dbReference>
<dbReference type="RNAct" id="P38310">
    <property type="molecule type" value="protein"/>
</dbReference>
<dbReference type="GO" id="GO:0005783">
    <property type="term" value="C:endoplasmic reticulum"/>
    <property type="evidence" value="ECO:0007005"/>
    <property type="project" value="SGD"/>
</dbReference>
<dbReference type="GO" id="GO:0000329">
    <property type="term" value="C:fungal-type vacuole membrane"/>
    <property type="evidence" value="ECO:0000314"/>
    <property type="project" value="SGD"/>
</dbReference>
<dbReference type="GO" id="GO:0061841">
    <property type="term" value="C:high-affinity iron exporter complex"/>
    <property type="evidence" value="ECO:0000353"/>
    <property type="project" value="ComplexPortal"/>
</dbReference>
<dbReference type="GO" id="GO:0033573">
    <property type="term" value="C:high-affinity iron permease complex"/>
    <property type="evidence" value="ECO:0000318"/>
    <property type="project" value="GO_Central"/>
</dbReference>
<dbReference type="GO" id="GO:0045121">
    <property type="term" value="C:membrane raft"/>
    <property type="evidence" value="ECO:0000314"/>
    <property type="project" value="SGD"/>
</dbReference>
<dbReference type="GO" id="GO:0005886">
    <property type="term" value="C:plasma membrane"/>
    <property type="evidence" value="ECO:0000318"/>
    <property type="project" value="GO_Central"/>
</dbReference>
<dbReference type="GO" id="GO:0015093">
    <property type="term" value="F:ferrous iron transmembrane transporter activity"/>
    <property type="evidence" value="ECO:0000318"/>
    <property type="project" value="GO_Central"/>
</dbReference>
<dbReference type="GO" id="GO:0005381">
    <property type="term" value="F:iron ion transmembrane transporter activity"/>
    <property type="evidence" value="ECO:0000250"/>
    <property type="project" value="SGD"/>
</dbReference>
<dbReference type="GO" id="GO:0006897">
    <property type="term" value="P:endocytosis"/>
    <property type="evidence" value="ECO:0000315"/>
    <property type="project" value="SGD"/>
</dbReference>
<dbReference type="GO" id="GO:0006879">
    <property type="term" value="P:intracellular iron ion homeostasis"/>
    <property type="evidence" value="ECO:0000314"/>
    <property type="project" value="ComplexPortal"/>
</dbReference>
<dbReference type="GO" id="GO:0034755">
    <property type="term" value="P:iron ion transmembrane transport"/>
    <property type="evidence" value="ECO:0000314"/>
    <property type="project" value="ComplexPortal"/>
</dbReference>
<dbReference type="InterPro" id="IPR004923">
    <property type="entry name" value="FTR1/Fip1/EfeU"/>
</dbReference>
<dbReference type="PANTHER" id="PTHR31632">
    <property type="entry name" value="IRON TRANSPORTER FTH1"/>
    <property type="match status" value="1"/>
</dbReference>
<dbReference type="PANTHER" id="PTHR31632:SF7">
    <property type="entry name" value="IRON TRANSPORTER FTH1"/>
    <property type="match status" value="1"/>
</dbReference>
<dbReference type="Pfam" id="PF03239">
    <property type="entry name" value="FTR1"/>
    <property type="match status" value="1"/>
</dbReference>
<keyword id="KW-0406">Ion transport</keyword>
<keyword id="KW-0408">Iron</keyword>
<keyword id="KW-0410">Iron transport</keyword>
<keyword id="KW-0472">Membrane</keyword>
<keyword id="KW-0597">Phosphoprotein</keyword>
<keyword id="KW-1185">Reference proteome</keyword>
<keyword id="KW-0812">Transmembrane</keyword>
<keyword id="KW-1133">Transmembrane helix</keyword>
<keyword id="KW-0813">Transport</keyword>
<keyword id="KW-0926">Vacuole</keyword>